<dbReference type="EMBL" id="AY905582">
    <property type="protein sequence ID" value="AAX86999.1"/>
    <property type="molecule type" value="mRNA"/>
</dbReference>
<dbReference type="EMBL" id="AK075849">
    <property type="protein sequence ID" value="BAC36003.1"/>
    <property type="molecule type" value="mRNA"/>
</dbReference>
<dbReference type="EMBL" id="AK163464">
    <property type="protein sequence ID" value="BAE37352.1"/>
    <property type="molecule type" value="mRNA"/>
</dbReference>
<dbReference type="EMBL" id="BC003847">
    <property type="protein sequence ID" value="AAH03847.1"/>
    <property type="molecule type" value="mRNA"/>
</dbReference>
<dbReference type="CCDS" id="CCDS29740.1"/>
<dbReference type="RefSeq" id="NP_001158196.1">
    <property type="nucleotide sequence ID" value="NM_001164724.2"/>
</dbReference>
<dbReference type="RefSeq" id="NP_001347654.1">
    <property type="nucleotide sequence ID" value="NM_001360725.1"/>
</dbReference>
<dbReference type="RefSeq" id="NP_598536.2">
    <property type="nucleotide sequence ID" value="NM_133775.3"/>
</dbReference>
<dbReference type="RefSeq" id="XP_006527526.1">
    <property type="nucleotide sequence ID" value="XM_006527463.4"/>
</dbReference>
<dbReference type="RefSeq" id="XP_011245701.1">
    <property type="nucleotide sequence ID" value="XM_011247399.2"/>
</dbReference>
<dbReference type="RefSeq" id="XP_036017623.1">
    <property type="nucleotide sequence ID" value="XM_036161730.1"/>
</dbReference>
<dbReference type="PDB" id="5VI4">
    <property type="method" value="X-ray"/>
    <property type="resolution" value="2.79 A"/>
    <property type="chains" value="A/D=109-266"/>
</dbReference>
<dbReference type="PDB" id="8Q5R">
    <property type="method" value="X-ray"/>
    <property type="resolution" value="2.10 A"/>
    <property type="chains" value="A=109-266"/>
</dbReference>
<dbReference type="PDBsum" id="5VI4"/>
<dbReference type="PDBsum" id="8Q5R"/>
<dbReference type="SASBDB" id="Q8BVZ5"/>
<dbReference type="SMR" id="Q8BVZ5"/>
<dbReference type="BioGRID" id="218533">
    <property type="interactions" value="1"/>
</dbReference>
<dbReference type="CORUM" id="Q8BVZ5"/>
<dbReference type="FunCoup" id="Q8BVZ5">
    <property type="interactions" value="770"/>
</dbReference>
<dbReference type="IntAct" id="Q8BVZ5">
    <property type="interactions" value="1"/>
</dbReference>
<dbReference type="STRING" id="10090.ENSMUSP00000025724"/>
<dbReference type="GlyGen" id="Q8BVZ5">
    <property type="glycosylation" value="2 sites, 2 N-linked glycans (2 sites)"/>
</dbReference>
<dbReference type="iPTMnet" id="Q8BVZ5"/>
<dbReference type="PhosphoSitePlus" id="Q8BVZ5"/>
<dbReference type="PaxDb" id="10090-ENSMUSP00000025724"/>
<dbReference type="ProteomicsDB" id="269549"/>
<dbReference type="Antibodypedia" id="3362">
    <property type="antibodies" value="1401 antibodies from 45 providers"/>
</dbReference>
<dbReference type="DNASU" id="77125"/>
<dbReference type="Ensembl" id="ENSMUST00000025724.9">
    <property type="protein sequence ID" value="ENSMUSP00000025724.9"/>
    <property type="gene ID" value="ENSMUSG00000024810.17"/>
</dbReference>
<dbReference type="Ensembl" id="ENSMUST00000120388.9">
    <property type="protein sequence ID" value="ENSMUSP00000113829.3"/>
    <property type="gene ID" value="ENSMUSG00000024810.17"/>
</dbReference>
<dbReference type="GeneID" id="77125"/>
<dbReference type="KEGG" id="mmu:77125"/>
<dbReference type="UCSC" id="uc008hec.2">
    <property type="organism name" value="mouse"/>
</dbReference>
<dbReference type="AGR" id="MGI:1924375"/>
<dbReference type="CTD" id="90865"/>
<dbReference type="MGI" id="MGI:1924375">
    <property type="gene designation" value="Il33"/>
</dbReference>
<dbReference type="VEuPathDB" id="HostDB:ENSMUSG00000024810"/>
<dbReference type="eggNOG" id="ENOG502RW83">
    <property type="taxonomic scope" value="Eukaryota"/>
</dbReference>
<dbReference type="GeneTree" id="ENSGT00390000005185"/>
<dbReference type="InParanoid" id="Q8BVZ5"/>
<dbReference type="OMA" id="KTACYFR"/>
<dbReference type="OrthoDB" id="9836513at2759"/>
<dbReference type="PhylomeDB" id="Q8BVZ5"/>
<dbReference type="TreeFam" id="TF338120"/>
<dbReference type="Reactome" id="R-MMU-1257604">
    <property type="pathway name" value="PIP3 activates AKT signaling"/>
</dbReference>
<dbReference type="Reactome" id="R-MMU-5689880">
    <property type="pathway name" value="Ub-specific processing proteases"/>
</dbReference>
<dbReference type="Reactome" id="R-MMU-6811558">
    <property type="pathway name" value="PI5P, PP2A and IER3 Regulate PI3K/AKT Signaling"/>
</dbReference>
<dbReference type="Reactome" id="R-MMU-9014843">
    <property type="pathway name" value="Interleukin-33 signaling"/>
</dbReference>
<dbReference type="BioGRID-ORCS" id="77125">
    <property type="hits" value="2 hits in 77 CRISPR screens"/>
</dbReference>
<dbReference type="ChiTaRS" id="Il33">
    <property type="organism name" value="mouse"/>
</dbReference>
<dbReference type="PRO" id="PR:Q8BVZ5"/>
<dbReference type="Proteomes" id="UP000000589">
    <property type="component" value="Chromosome 19"/>
</dbReference>
<dbReference type="RNAct" id="Q8BVZ5">
    <property type="molecule type" value="protein"/>
</dbReference>
<dbReference type="Bgee" id="ENSMUSG00000024810">
    <property type="expression patterns" value="Expressed in ciliary body and 214 other cell types or tissues"/>
</dbReference>
<dbReference type="ExpressionAtlas" id="Q8BVZ5">
    <property type="expression patterns" value="baseline and differential"/>
</dbReference>
<dbReference type="GO" id="GO:0005694">
    <property type="term" value="C:chromosome"/>
    <property type="evidence" value="ECO:0007669"/>
    <property type="project" value="UniProtKB-SubCell"/>
</dbReference>
<dbReference type="GO" id="GO:0005615">
    <property type="term" value="C:extracellular space"/>
    <property type="evidence" value="ECO:0000314"/>
    <property type="project" value="UniProt"/>
</dbReference>
<dbReference type="GO" id="GO:0005654">
    <property type="term" value="C:nucleoplasm"/>
    <property type="evidence" value="ECO:0007669"/>
    <property type="project" value="Ensembl"/>
</dbReference>
<dbReference type="GO" id="GO:0005634">
    <property type="term" value="C:nucleus"/>
    <property type="evidence" value="ECO:0000314"/>
    <property type="project" value="UniProtKB"/>
</dbReference>
<dbReference type="GO" id="GO:0030133">
    <property type="term" value="C:transport vesicle"/>
    <property type="evidence" value="ECO:0007669"/>
    <property type="project" value="UniProtKB-SubCell"/>
</dbReference>
<dbReference type="GO" id="GO:0005125">
    <property type="term" value="F:cytokine activity"/>
    <property type="evidence" value="ECO:0000314"/>
    <property type="project" value="BHF-UCL"/>
</dbReference>
<dbReference type="GO" id="GO:0002112">
    <property type="term" value="F:interleukin-33 receptor binding"/>
    <property type="evidence" value="ECO:0000353"/>
    <property type="project" value="UniProtKB"/>
</dbReference>
<dbReference type="GO" id="GO:0140367">
    <property type="term" value="P:antibacterial innate immune response"/>
    <property type="evidence" value="ECO:0000314"/>
    <property type="project" value="ARUK-UCL"/>
</dbReference>
<dbReference type="GO" id="GO:0051607">
    <property type="term" value="P:defense response to virus"/>
    <property type="evidence" value="ECO:0000314"/>
    <property type="project" value="MGI"/>
</dbReference>
<dbReference type="GO" id="GO:0097191">
    <property type="term" value="P:extrinsic apoptotic signaling pathway"/>
    <property type="evidence" value="ECO:0000316"/>
    <property type="project" value="MGI"/>
</dbReference>
<dbReference type="GO" id="GO:0010467">
    <property type="term" value="P:gene expression"/>
    <property type="evidence" value="ECO:0000314"/>
    <property type="project" value="MGI"/>
</dbReference>
<dbReference type="GO" id="GO:0038172">
    <property type="term" value="P:interleukin-33-mediated signaling pathway"/>
    <property type="evidence" value="ECO:0000314"/>
    <property type="project" value="ARUK-UCL"/>
</dbReference>
<dbReference type="GO" id="GO:0002281">
    <property type="term" value="P:macrophage activation involved in immune response"/>
    <property type="evidence" value="ECO:0000314"/>
    <property type="project" value="UniProtKB"/>
</dbReference>
<dbReference type="GO" id="GO:0030225">
    <property type="term" value="P:macrophage differentiation"/>
    <property type="evidence" value="ECO:0000314"/>
    <property type="project" value="UniProtKB"/>
</dbReference>
<dbReference type="GO" id="GO:0002282">
    <property type="term" value="P:microglial cell activation involved in immune response"/>
    <property type="evidence" value="ECO:0000314"/>
    <property type="project" value="UniProtKB"/>
</dbReference>
<dbReference type="GO" id="GO:0061518">
    <property type="term" value="P:microglial cell proliferation"/>
    <property type="evidence" value="ECO:0000314"/>
    <property type="project" value="UniProtKB"/>
</dbReference>
<dbReference type="GO" id="GO:0002638">
    <property type="term" value="P:negative regulation of immunoglobulin production"/>
    <property type="evidence" value="ECO:0000316"/>
    <property type="project" value="BHF-UCL"/>
</dbReference>
<dbReference type="GO" id="GO:0106015">
    <property type="term" value="P:negative regulation of inflammatory response to wounding"/>
    <property type="evidence" value="ECO:0000314"/>
    <property type="project" value="UniProt"/>
</dbReference>
<dbReference type="GO" id="GO:0002686">
    <property type="term" value="P:negative regulation of leukocyte migration"/>
    <property type="evidence" value="ECO:0000316"/>
    <property type="project" value="BHF-UCL"/>
</dbReference>
<dbReference type="GO" id="GO:0120042">
    <property type="term" value="P:negative regulation of macrophage proliferation"/>
    <property type="evidence" value="ECO:0000314"/>
    <property type="project" value="ARUK-UCL"/>
</dbReference>
<dbReference type="GO" id="GO:0002826">
    <property type="term" value="P:negative regulation of T-helper 1 type immune response"/>
    <property type="evidence" value="ECO:0000316"/>
    <property type="project" value="BHF-UCL"/>
</dbReference>
<dbReference type="GO" id="GO:0000122">
    <property type="term" value="P:negative regulation of transcription by RNA polymerase II"/>
    <property type="evidence" value="ECO:0007669"/>
    <property type="project" value="Ensembl"/>
</dbReference>
<dbReference type="GO" id="GO:0032689">
    <property type="term" value="P:negative regulation of type II interferon production"/>
    <property type="evidence" value="ECO:0000316"/>
    <property type="project" value="BHF-UCL"/>
</dbReference>
<dbReference type="GO" id="GO:0010186">
    <property type="term" value="P:positive regulation of cellular defense response"/>
    <property type="evidence" value="ECO:0000315"/>
    <property type="project" value="ARUK-UCL"/>
</dbReference>
<dbReference type="GO" id="GO:0032722">
    <property type="term" value="P:positive regulation of chemokine production"/>
    <property type="evidence" value="ECO:0000314"/>
    <property type="project" value="BHF-UCL"/>
</dbReference>
<dbReference type="GO" id="GO:0010628">
    <property type="term" value="P:positive regulation of gene expression"/>
    <property type="evidence" value="ECO:0000314"/>
    <property type="project" value="ARUK-UCL"/>
</dbReference>
<dbReference type="GO" id="GO:0010560">
    <property type="term" value="P:positive regulation of glycoprotein biosynthetic process"/>
    <property type="evidence" value="ECO:0000314"/>
    <property type="project" value="ARUK-UCL"/>
</dbReference>
<dbReference type="GO" id="GO:0002639">
    <property type="term" value="P:positive regulation of immunoglobulin production"/>
    <property type="evidence" value="ECO:0000316"/>
    <property type="project" value="BHF-UCL"/>
</dbReference>
<dbReference type="GO" id="GO:0050729">
    <property type="term" value="P:positive regulation of inflammatory response"/>
    <property type="evidence" value="ECO:0000314"/>
    <property type="project" value="BHF-UCL"/>
</dbReference>
<dbReference type="GO" id="GO:0032736">
    <property type="term" value="P:positive regulation of interleukin-13 production"/>
    <property type="evidence" value="ECO:0000316"/>
    <property type="project" value="BHF-UCL"/>
</dbReference>
<dbReference type="GO" id="GO:0032753">
    <property type="term" value="P:positive regulation of interleukin-4 production"/>
    <property type="evidence" value="ECO:0000316"/>
    <property type="project" value="BHF-UCL"/>
</dbReference>
<dbReference type="GO" id="GO:0032754">
    <property type="term" value="P:positive regulation of interleukin-5 production"/>
    <property type="evidence" value="ECO:0000316"/>
    <property type="project" value="BHF-UCL"/>
</dbReference>
<dbReference type="GO" id="GO:0032755">
    <property type="term" value="P:positive regulation of interleukin-6 production"/>
    <property type="evidence" value="ECO:0000314"/>
    <property type="project" value="ARUK-UCL"/>
</dbReference>
<dbReference type="GO" id="GO:0043032">
    <property type="term" value="P:positive regulation of macrophage activation"/>
    <property type="evidence" value="ECO:0000314"/>
    <property type="project" value="BHF-UCL"/>
</dbReference>
<dbReference type="GO" id="GO:0045345">
    <property type="term" value="P:positive regulation of MHC class I biosynthetic process"/>
    <property type="evidence" value="ECO:0000314"/>
    <property type="project" value="ARUK-UCL"/>
</dbReference>
<dbReference type="GO" id="GO:0045348">
    <property type="term" value="P:positive regulation of MHC class II biosynthetic process"/>
    <property type="evidence" value="ECO:0000314"/>
    <property type="project" value="ARUK-UCL"/>
</dbReference>
<dbReference type="GO" id="GO:0032436">
    <property type="term" value="P:positive regulation of proteasomal ubiquitin-dependent protein catabolic process"/>
    <property type="evidence" value="ECO:0000314"/>
    <property type="project" value="MGI"/>
</dbReference>
<dbReference type="GO" id="GO:0045944">
    <property type="term" value="P:positive regulation of transcription by RNA polymerase II"/>
    <property type="evidence" value="ECO:0000314"/>
    <property type="project" value="BHF-UCL"/>
</dbReference>
<dbReference type="GO" id="GO:0032760">
    <property type="term" value="P:positive regulation of tumor necrosis factor production"/>
    <property type="evidence" value="ECO:0000314"/>
    <property type="project" value="ARUK-UCL"/>
</dbReference>
<dbReference type="GO" id="GO:0002830">
    <property type="term" value="P:positive regulation of type 2 immune response"/>
    <property type="evidence" value="ECO:0000314"/>
    <property type="project" value="MGI"/>
</dbReference>
<dbReference type="GO" id="GO:0006606">
    <property type="term" value="P:protein import into nucleus"/>
    <property type="evidence" value="ECO:0000314"/>
    <property type="project" value="MGI"/>
</dbReference>
<dbReference type="GO" id="GO:0009611">
    <property type="term" value="P:response to wounding"/>
    <property type="evidence" value="ECO:0000314"/>
    <property type="project" value="MGI"/>
</dbReference>
<dbReference type="GO" id="GO:0042092">
    <property type="term" value="P:type 2 immune response"/>
    <property type="evidence" value="ECO:0000314"/>
    <property type="project" value="MGI"/>
</dbReference>
<dbReference type="CDD" id="cd23299">
    <property type="entry name" value="beta-trefoil_IL33"/>
    <property type="match status" value="1"/>
</dbReference>
<dbReference type="FunFam" id="2.80.10.50:FF:000052">
    <property type="entry name" value="Interleukin 33"/>
    <property type="match status" value="1"/>
</dbReference>
<dbReference type="Gene3D" id="2.80.10.50">
    <property type="match status" value="1"/>
</dbReference>
<dbReference type="InterPro" id="IPR026145">
    <property type="entry name" value="IL-33"/>
</dbReference>
<dbReference type="InterPro" id="IPR053902">
    <property type="entry name" value="IL33_C"/>
</dbReference>
<dbReference type="PANTHER" id="PTHR21114">
    <property type="entry name" value="DVS27 PROTEIN"/>
    <property type="match status" value="1"/>
</dbReference>
<dbReference type="PANTHER" id="PTHR21114:SF0">
    <property type="entry name" value="INTERLEUKIN-33"/>
    <property type="match status" value="1"/>
</dbReference>
<dbReference type="Pfam" id="PF15095">
    <property type="entry name" value="IL33_bt"/>
    <property type="match status" value="1"/>
</dbReference>
<evidence type="ECO:0000250" key="1"/>
<evidence type="ECO:0000250" key="2">
    <source>
        <dbReference type="UniProtKB" id="O95760"/>
    </source>
</evidence>
<evidence type="ECO:0000269" key="3">
    <source>
    </source>
</evidence>
<evidence type="ECO:0000269" key="4">
    <source>
    </source>
</evidence>
<evidence type="ECO:0000269" key="5">
    <source>
    </source>
</evidence>
<evidence type="ECO:0000269" key="6">
    <source>
    </source>
</evidence>
<evidence type="ECO:0000269" key="7">
    <source>
    </source>
</evidence>
<evidence type="ECO:0000269" key="8">
    <source>
    </source>
</evidence>
<evidence type="ECO:0000269" key="9">
    <source>
    </source>
</evidence>
<evidence type="ECO:0000269" key="10">
    <source>
    </source>
</evidence>
<evidence type="ECO:0000305" key="11"/>
<evidence type="ECO:0000312" key="12">
    <source>
        <dbReference type="MGI" id="MGI:1924375"/>
    </source>
</evidence>
<evidence type="ECO:0007829" key="13">
    <source>
        <dbReference type="PDB" id="5VI4"/>
    </source>
</evidence>
<evidence type="ECO:0007829" key="14">
    <source>
        <dbReference type="PDB" id="8Q5R"/>
    </source>
</evidence>
<feature type="chain" id="PRO_0000096791" description="Interleukin-33">
    <location>
        <begin position="1"/>
        <end position="266"/>
    </location>
</feature>
<feature type="propeptide" id="PRO_0000430087" evidence="11">
    <location>
        <begin position="1"/>
        <end position="101"/>
    </location>
</feature>
<feature type="chain" id="PRO_0000430088" description="Interleukin-33(102-266)" evidence="11">
    <location>
        <begin position="102"/>
        <end position="266"/>
    </location>
</feature>
<feature type="chain" id="PRO_0000430089" description="Interleukin-33(109-266)" evidence="11">
    <location>
        <begin position="109"/>
        <end position="266"/>
    </location>
</feature>
<feature type="region of interest" description="Homeodomain-like HTH domain" evidence="2">
    <location>
        <begin position="1"/>
        <end position="67"/>
    </location>
</feature>
<feature type="region of interest" description="Interaction with RELA" evidence="5">
    <location>
        <begin position="66"/>
        <end position="108"/>
    </location>
</feature>
<feature type="site" description="Cleavage; by CTSG and ELANE" evidence="6">
    <location>
        <begin position="101"/>
        <end position="102"/>
    </location>
</feature>
<feature type="site" description="Cleavage; by ELANE" evidence="6">
    <location>
        <begin position="108"/>
        <end position="109"/>
    </location>
</feature>
<feature type="sequence conflict" description="In Ref. 1; AAX86999." evidence="11" ref="1">
    <original>AL</original>
    <variation>RS</variation>
    <location>
        <begin position="24"/>
        <end position="25"/>
    </location>
</feature>
<feature type="sequence conflict" description="In Ref. 3; AAH03847." evidence="11" ref="3">
    <original>L</original>
    <variation>V</variation>
    <location>
        <position position="179"/>
    </location>
</feature>
<feature type="sequence conflict" description="In Ref. 1; AAX86999." evidence="11" ref="1">
    <original>P</original>
    <variation>S</variation>
    <location>
        <position position="185"/>
    </location>
</feature>
<feature type="strand" evidence="14">
    <location>
        <begin position="116"/>
        <end position="125"/>
    </location>
</feature>
<feature type="strand" evidence="14">
    <location>
        <begin position="130"/>
        <end position="136"/>
    </location>
</feature>
<feature type="strand" evidence="14">
    <location>
        <begin position="139"/>
        <end position="145"/>
    </location>
</feature>
<feature type="strand" evidence="14">
    <location>
        <begin position="156"/>
        <end position="163"/>
    </location>
</feature>
<feature type="strand" evidence="14">
    <location>
        <begin position="178"/>
        <end position="185"/>
    </location>
</feature>
<feature type="strand" evidence="14">
    <location>
        <begin position="191"/>
        <end position="196"/>
    </location>
</feature>
<feature type="turn" evidence="14">
    <location>
        <begin position="197"/>
        <end position="200"/>
    </location>
</feature>
<feature type="strand" evidence="14">
    <location>
        <begin position="201"/>
        <end position="206"/>
    </location>
</feature>
<feature type="turn" evidence="14">
    <location>
        <begin position="207"/>
        <end position="209"/>
    </location>
</feature>
<feature type="helix" evidence="14">
    <location>
        <begin position="212"/>
        <end position="215"/>
    </location>
</feature>
<feature type="strand" evidence="14">
    <location>
        <begin position="217"/>
        <end position="221"/>
    </location>
</feature>
<feature type="helix" evidence="14">
    <location>
        <begin position="223"/>
        <end position="225"/>
    </location>
</feature>
<feature type="strand" evidence="14">
    <location>
        <begin position="227"/>
        <end position="230"/>
    </location>
</feature>
<feature type="strand" evidence="14">
    <location>
        <begin position="232"/>
        <end position="234"/>
    </location>
</feature>
<feature type="strand" evidence="14">
    <location>
        <begin position="237"/>
        <end position="242"/>
    </location>
</feature>
<feature type="strand" evidence="14">
    <location>
        <begin position="245"/>
        <end position="251"/>
    </location>
</feature>
<feature type="turn" evidence="13">
    <location>
        <begin position="253"/>
        <end position="255"/>
    </location>
</feature>
<feature type="helix" evidence="14">
    <location>
        <begin position="256"/>
        <end position="259"/>
    </location>
</feature>
<feature type="strand" evidence="14">
    <location>
        <begin position="261"/>
        <end position="264"/>
    </location>
</feature>
<keyword id="KW-0002">3D-structure</keyword>
<keyword id="KW-0158">Chromosome</keyword>
<keyword id="KW-0202">Cytokine</keyword>
<keyword id="KW-0963">Cytoplasm</keyword>
<keyword id="KW-0968">Cytoplasmic vesicle</keyword>
<keyword id="KW-0539">Nucleus</keyword>
<keyword id="KW-1185">Reference proteome</keyword>
<keyword id="KW-0964">Secreted</keyword>
<keyword id="KW-0804">Transcription</keyword>
<comment type="function">
    <text evidence="2 7 8">Cytokine that binds to and signals through the IL1RL1/ST2 receptor which in turn activates NF-kappa-B and MAPK signaling pathways in target cells (PubMed:29045903). Involved in the maturation of Th2 cells inducing the secretion of T-helper type 2-associated cytokines (By similarity). Also involved in activation of mast cells, basophils, eosinophils and natural killer cells (By similarity). Acts as an enhancer of polarization of alternatively activated macrophages (By similarity). Acts as a chemoattractant for Th2 cells, and may function as an 'alarmin', that amplifies immune responses during tissue injury (By similarity). Induces rapid UCP2-dependent mitochondrial rewiring that attenuates the generation of reactive oxygen species and preserves the integrity of Krebs cycle required for persistent production of itaconate and subsequent GATA3-dependent differentiation of inflammation-resolving alternatively activated macrophages (PubMed:34644537).</text>
</comment>
<comment type="function">
    <text evidence="2">In quiescent endothelia the uncleaved form is constitutively and abundantly expressed, and acts as a chromatin-associated nuclear factor with transcriptional repressor properties, it may sequester nuclear NF-kappaB/RELA, lowering expression of its targets (By similarity). This form is rapidely lost upon angiogenic or pro-inflammatory activation (By similarity).</text>
</comment>
<comment type="subunit">
    <text evidence="7">(Microbial infection) Interacts (in reduced form) with H.polygyrus ARI; the interaction abolishes the interaction with its primary receptor IL1RL1.</text>
</comment>
<comment type="subunit">
    <text evidence="2">Forms a 1:1:1 heterotrimeric complex with its primary high-affinity receptor IL1RL1 and the coreceptor IL1RAP. Interacts with cargo receptor TMED10; the interaction mediates the translocation from the cytoplasm into the ERGIC (endoplasmic reticulum-Golgi intermediate compartment) and thereby secretion.</text>
</comment>
<comment type="subcellular location">
    <subcellularLocation>
        <location evidence="8">Nucleus</location>
    </subcellularLocation>
    <subcellularLocation>
        <location evidence="2">Chromosome</location>
    </subcellularLocation>
    <subcellularLocation>
        <location evidence="2">Cytoplasm</location>
    </subcellularLocation>
    <subcellularLocation>
        <location evidence="2">Cytoplasmic vesicle</location>
        <location evidence="2">Secretory vesicle</location>
    </subcellularLocation>
    <subcellularLocation>
        <location evidence="9 10">Secreted</location>
    </subcellularLocation>
    <text evidence="2 9 10">Secreted and released in the extracellular milieu by passing through the gasdermin-D (GSDMD) pore following cleavage by CELA1 (PubMed:35749514, PubMed:35794369). Associates with heterochromatin and mitotic chromosomes (By similarity). The secretion is dependent on protein unfolding and facilitated by the cargo receptor TMED10; it results in protein translocation from the cytoplasm into the ERGIC (endoplasmic reticulum-Golgi intermediate compartment) followed by vesicle entry and secretion (By similarity).</text>
</comment>
<comment type="subcellular location">
    <subcellularLocation>
        <location evidence="7">Nucleus</location>
    </subcellularLocation>
    <text evidence="7">(Microbial infection) Upon infection with H.polygyrus, tethered to the nucleus by the H.polygyrus parasitic protein ARI.</text>
</comment>
<comment type="induction">
    <text evidence="7">By cold stress, and by infection with the fungus A.alternata and the parasite H.polygyrus.</text>
</comment>
<comment type="domain">
    <text evidence="1">The homeodomain-like HTH domain mediates nuclear localization and heterochromatin association.</text>
</comment>
<comment type="PTM">
    <text evidence="3 4 6 9">The full-length protein can be released from cells and is able to signal via the IL1RL1/ST2 receptor (PubMed:16286016). However, proteolytic processing by CELA1, CSTG/cathepsin G and ELANE/neutrophil elastase produces C-terminal peptides that are more active than the unprocessed full-length protein (PubMed:22307629, PubMed:35749514). May also be proteolytically processed by calpains. Proteolytic cleavage mediated by apoptotic caspases including CASP3 and CASP7 results in IL33 inactivation (PubMed:16286016, PubMed:19465481). In vitro proteolytic cleavage by CASP1 was reported (PubMed:16286016) but could not be confirmed in vivo (PubMed:19465481) suggesting that IL33 is probably not a direct substrate for that caspase (PubMed:16286016, PubMed:19465481).</text>
</comment>
<comment type="miscellaneous">
    <text>Intraperitoneal injections of IL-33 induce the expression of IL-4, IL-5, and IL-13 and lead to severe pathological changes in mucosal organs.</text>
</comment>
<comment type="similarity">
    <text evidence="11">Belongs to the IL-1 family. Highly divergent.</text>
</comment>
<organism>
    <name type="scientific">Mus musculus</name>
    <name type="common">Mouse</name>
    <dbReference type="NCBI Taxonomy" id="10090"/>
    <lineage>
        <taxon>Eukaryota</taxon>
        <taxon>Metazoa</taxon>
        <taxon>Chordata</taxon>
        <taxon>Craniata</taxon>
        <taxon>Vertebrata</taxon>
        <taxon>Euteleostomi</taxon>
        <taxon>Mammalia</taxon>
        <taxon>Eutheria</taxon>
        <taxon>Euarchontoglires</taxon>
        <taxon>Glires</taxon>
        <taxon>Rodentia</taxon>
        <taxon>Myomorpha</taxon>
        <taxon>Muroidea</taxon>
        <taxon>Muridae</taxon>
        <taxon>Murinae</taxon>
        <taxon>Mus</taxon>
        <taxon>Mus</taxon>
    </lineage>
</organism>
<reference key="1">
    <citation type="journal article" date="2005" name="Immunity">
        <title>IL-33, an interleukin-1-like cytokine that signals via the IL-1 receptor-related protein ST 2 and induces T helper type 2-associated cytokines.</title>
        <authorList>
            <person name="Schmitz J."/>
            <person name="Owyang A."/>
            <person name="Oldham E."/>
            <person name="Song Y."/>
            <person name="Murphy E."/>
            <person name="McClanahan T.K."/>
            <person name="Zurawski G."/>
            <person name="Moshrefi M."/>
            <person name="Qin J."/>
            <person name="Li X."/>
            <person name="Gorman D.M."/>
            <person name="Bazan J.F."/>
            <person name="Kastelein R.A."/>
        </authorList>
    </citation>
    <scope>NUCLEOTIDE SEQUENCE [MRNA]</scope>
    <scope>FUNCTION</scope>
    <source>
        <strain>BALB/cJ</strain>
    </source>
</reference>
<reference key="2">
    <citation type="journal article" date="2005" name="Science">
        <title>The transcriptional landscape of the mammalian genome.</title>
        <authorList>
            <person name="Carninci P."/>
            <person name="Kasukawa T."/>
            <person name="Katayama S."/>
            <person name="Gough J."/>
            <person name="Frith M.C."/>
            <person name="Maeda N."/>
            <person name="Oyama R."/>
            <person name="Ravasi T."/>
            <person name="Lenhard B."/>
            <person name="Wells C."/>
            <person name="Kodzius R."/>
            <person name="Shimokawa K."/>
            <person name="Bajic V.B."/>
            <person name="Brenner S.E."/>
            <person name="Batalov S."/>
            <person name="Forrest A.R."/>
            <person name="Zavolan M."/>
            <person name="Davis M.J."/>
            <person name="Wilming L.G."/>
            <person name="Aidinis V."/>
            <person name="Allen J.E."/>
            <person name="Ambesi-Impiombato A."/>
            <person name="Apweiler R."/>
            <person name="Aturaliya R.N."/>
            <person name="Bailey T.L."/>
            <person name="Bansal M."/>
            <person name="Baxter L."/>
            <person name="Beisel K.W."/>
            <person name="Bersano T."/>
            <person name="Bono H."/>
            <person name="Chalk A.M."/>
            <person name="Chiu K.P."/>
            <person name="Choudhary V."/>
            <person name="Christoffels A."/>
            <person name="Clutterbuck D.R."/>
            <person name="Crowe M.L."/>
            <person name="Dalla E."/>
            <person name="Dalrymple B.P."/>
            <person name="de Bono B."/>
            <person name="Della Gatta G."/>
            <person name="di Bernardo D."/>
            <person name="Down T."/>
            <person name="Engstrom P."/>
            <person name="Fagiolini M."/>
            <person name="Faulkner G."/>
            <person name="Fletcher C.F."/>
            <person name="Fukushima T."/>
            <person name="Furuno M."/>
            <person name="Futaki S."/>
            <person name="Gariboldi M."/>
            <person name="Georgii-Hemming P."/>
            <person name="Gingeras T.R."/>
            <person name="Gojobori T."/>
            <person name="Green R.E."/>
            <person name="Gustincich S."/>
            <person name="Harbers M."/>
            <person name="Hayashi Y."/>
            <person name="Hensch T.K."/>
            <person name="Hirokawa N."/>
            <person name="Hill D."/>
            <person name="Huminiecki L."/>
            <person name="Iacono M."/>
            <person name="Ikeo K."/>
            <person name="Iwama A."/>
            <person name="Ishikawa T."/>
            <person name="Jakt M."/>
            <person name="Kanapin A."/>
            <person name="Katoh M."/>
            <person name="Kawasawa Y."/>
            <person name="Kelso J."/>
            <person name="Kitamura H."/>
            <person name="Kitano H."/>
            <person name="Kollias G."/>
            <person name="Krishnan S.P."/>
            <person name="Kruger A."/>
            <person name="Kummerfeld S.K."/>
            <person name="Kurochkin I.V."/>
            <person name="Lareau L.F."/>
            <person name="Lazarevic D."/>
            <person name="Lipovich L."/>
            <person name="Liu J."/>
            <person name="Liuni S."/>
            <person name="McWilliam S."/>
            <person name="Madan Babu M."/>
            <person name="Madera M."/>
            <person name="Marchionni L."/>
            <person name="Matsuda H."/>
            <person name="Matsuzawa S."/>
            <person name="Miki H."/>
            <person name="Mignone F."/>
            <person name="Miyake S."/>
            <person name="Morris K."/>
            <person name="Mottagui-Tabar S."/>
            <person name="Mulder N."/>
            <person name="Nakano N."/>
            <person name="Nakauchi H."/>
            <person name="Ng P."/>
            <person name="Nilsson R."/>
            <person name="Nishiguchi S."/>
            <person name="Nishikawa S."/>
            <person name="Nori F."/>
            <person name="Ohara O."/>
            <person name="Okazaki Y."/>
            <person name="Orlando V."/>
            <person name="Pang K.C."/>
            <person name="Pavan W.J."/>
            <person name="Pavesi G."/>
            <person name="Pesole G."/>
            <person name="Petrovsky N."/>
            <person name="Piazza S."/>
            <person name="Reed J."/>
            <person name="Reid J.F."/>
            <person name="Ring B.Z."/>
            <person name="Ringwald M."/>
            <person name="Rost B."/>
            <person name="Ruan Y."/>
            <person name="Salzberg S.L."/>
            <person name="Sandelin A."/>
            <person name="Schneider C."/>
            <person name="Schoenbach C."/>
            <person name="Sekiguchi K."/>
            <person name="Semple C.A."/>
            <person name="Seno S."/>
            <person name="Sessa L."/>
            <person name="Sheng Y."/>
            <person name="Shibata Y."/>
            <person name="Shimada H."/>
            <person name="Shimada K."/>
            <person name="Silva D."/>
            <person name="Sinclair B."/>
            <person name="Sperling S."/>
            <person name="Stupka E."/>
            <person name="Sugiura K."/>
            <person name="Sultana R."/>
            <person name="Takenaka Y."/>
            <person name="Taki K."/>
            <person name="Tammoja K."/>
            <person name="Tan S.L."/>
            <person name="Tang S."/>
            <person name="Taylor M.S."/>
            <person name="Tegner J."/>
            <person name="Teichmann S.A."/>
            <person name="Ueda H.R."/>
            <person name="van Nimwegen E."/>
            <person name="Verardo R."/>
            <person name="Wei C.L."/>
            <person name="Yagi K."/>
            <person name="Yamanishi H."/>
            <person name="Zabarovsky E."/>
            <person name="Zhu S."/>
            <person name="Zimmer A."/>
            <person name="Hide W."/>
            <person name="Bult C."/>
            <person name="Grimmond S.M."/>
            <person name="Teasdale R.D."/>
            <person name="Liu E.T."/>
            <person name="Brusic V."/>
            <person name="Quackenbush J."/>
            <person name="Wahlestedt C."/>
            <person name="Mattick J.S."/>
            <person name="Hume D.A."/>
            <person name="Kai C."/>
            <person name="Sasaki D."/>
            <person name="Tomaru Y."/>
            <person name="Fukuda S."/>
            <person name="Kanamori-Katayama M."/>
            <person name="Suzuki M."/>
            <person name="Aoki J."/>
            <person name="Arakawa T."/>
            <person name="Iida J."/>
            <person name="Imamura K."/>
            <person name="Itoh M."/>
            <person name="Kato T."/>
            <person name="Kawaji H."/>
            <person name="Kawagashira N."/>
            <person name="Kawashima T."/>
            <person name="Kojima M."/>
            <person name="Kondo S."/>
            <person name="Konno H."/>
            <person name="Nakano K."/>
            <person name="Ninomiya N."/>
            <person name="Nishio T."/>
            <person name="Okada M."/>
            <person name="Plessy C."/>
            <person name="Shibata K."/>
            <person name="Shiraki T."/>
            <person name="Suzuki S."/>
            <person name="Tagami M."/>
            <person name="Waki K."/>
            <person name="Watahiki A."/>
            <person name="Okamura-Oho Y."/>
            <person name="Suzuki H."/>
            <person name="Kawai J."/>
            <person name="Hayashizaki Y."/>
        </authorList>
    </citation>
    <scope>NUCLEOTIDE SEQUENCE [LARGE SCALE MRNA]</scope>
    <source>
        <strain>C57BL/6J</strain>
        <tissue>Corpora quadrigemina</tissue>
        <tissue>Gastric mucosa</tissue>
    </source>
</reference>
<reference key="3">
    <citation type="journal article" date="2004" name="Genome Res.">
        <title>The status, quality, and expansion of the NIH full-length cDNA project: the Mammalian Gene Collection (MGC).</title>
        <authorList>
            <consortium name="The MGC Project Team"/>
        </authorList>
    </citation>
    <scope>NUCLEOTIDE SEQUENCE [LARGE SCALE MRNA]</scope>
    <source>
        <strain>FVB/N</strain>
        <tissue>Mammary gland</tissue>
    </source>
</reference>
<reference key="4">
    <citation type="journal article" date="2009" name="J. Biol. Chem.">
        <title>Interleukin-33 is biologically active independently of caspase-1 cleavage.</title>
        <authorList>
            <person name="Talabot-Ayer D."/>
            <person name="Lamacchia C."/>
            <person name="Gabay C."/>
            <person name="Palmer G."/>
        </authorList>
    </citation>
    <scope>FUNCTION</scope>
    <scope>PROTEOLYTIC PROCESSING</scope>
    <scope>SUBCELLULAR LOCATION</scope>
</reference>
<reference key="5">
    <citation type="journal article" date="2011" name="J. Immunol.">
        <title>The dual function cytokine IL-33 interacts with the transcription factor NF-kappaB to dampen NF-kappaB-stimulated gene transcription.</title>
        <authorList>
            <person name="Ali S."/>
            <person name="Mohs A."/>
            <person name="Thomas M."/>
            <person name="Klare J."/>
            <person name="Ross R."/>
            <person name="Schmitz M.L."/>
            <person name="Martin M.U."/>
        </authorList>
    </citation>
    <scope>FUNCTION</scope>
    <scope>SUBCELLULAR LOCATION</scope>
    <scope>INTERACTION WITH NF-KAPPAB/RELA</scope>
</reference>
<reference key="6">
    <citation type="journal article" date="2012" name="Proc. Natl. Acad. Sci. U.S.A.">
        <title>IL-33 is processed into mature bioactive forms by neutrophil elastase and cathepsin G.</title>
        <authorList>
            <person name="Lefrancais E."/>
            <person name="Roga S."/>
            <person name="Gautier V."/>
            <person name="Gonzalez-de-Peredo A."/>
            <person name="Monsarrat B."/>
            <person name="Girard J.P."/>
            <person name="Cayrol C."/>
        </authorList>
    </citation>
    <scope>PROTEOLYTIC CLEAVAGE AT PHE-101 BY CSTG AND ELANE</scope>
    <scope>PROTEOLYTIC CLEAVAGE AT LEU-108 BY ELANE</scope>
</reference>
<reference key="7">
    <citation type="journal article" date="2017" name="Immunity">
        <title>HpARI Protein Secreted by a Helminth Parasite Suppresses Interleukin-33.</title>
        <authorList>
            <person name="Osbourn M."/>
            <person name="Soares D.C."/>
            <person name="Vacca F."/>
            <person name="Cohen E.S."/>
            <person name="Scott I.C."/>
            <person name="Gregory W.F."/>
            <person name="Smyth D.J."/>
            <person name="Toivakka M."/>
            <person name="Kemter A.M."/>
            <person name="le Bihan T."/>
            <person name="Wear M."/>
            <person name="Hoving D."/>
            <person name="Filbey K.J."/>
            <person name="Hewitson J.P."/>
            <person name="Henderson H."/>
            <person name="Gonzalez-Ciscar A."/>
            <person name="Errington C."/>
            <person name="Vermeren S."/>
            <person name="Astier A.L."/>
            <person name="Wallace W.A."/>
            <person name="Schwarze J."/>
            <person name="Ivens A.C."/>
            <person name="Maizels R.M."/>
            <person name="McSorley H.J."/>
        </authorList>
    </citation>
    <scope>FUNCTION</scope>
    <scope>INTERACTION WITH H.POLYGYRUS ARI</scope>
    <scope>SUBCELLULAR LOCATION</scope>
    <scope>INDUCTION BY A.ALTERNATA AND H.POLYGYRUS</scope>
</reference>
<reference key="8">
    <citation type="journal article" date="2021" name="Immunity">
        <title>IL-33-induced metabolic reprogramming controls the differentiation of alternatively activated macrophages and the resolution of inflammation.</title>
        <authorList>
            <person name="Faas M."/>
            <person name="Ipseiz N."/>
            <person name="Ackermann J."/>
            <person name="Culemann S."/>
            <person name="Grueneboom A."/>
            <person name="Schroeder F."/>
            <person name="Rothe T."/>
            <person name="Scholtysek C."/>
            <person name="Eberhardt M."/>
            <person name="Boettcher M."/>
            <person name="Kirchner P."/>
            <person name="Stoll C."/>
            <person name="Ekici A."/>
            <person name="Fuchs M."/>
            <person name="Kunz M."/>
            <person name="Weigmann B."/>
            <person name="Wirtz S."/>
            <person name="Lang R."/>
            <person name="Hofmann J."/>
            <person name="Vera J."/>
            <person name="Voehringer D."/>
            <person name="Michelucci A."/>
            <person name="Mougiakakos D."/>
            <person name="Uderhardt S."/>
            <person name="Schett G."/>
            <person name="Kroenke G."/>
        </authorList>
    </citation>
    <scope>FUNCTION</scope>
    <scope>SUBCELLULAR LOCATION</scope>
</reference>
<reference key="9">
    <citation type="journal article" date="2022" name="Nat. Immunol.">
        <title>Allergen protease-activated stress granule assembly and gasdermin D fragmentation control interleukin-33 secretion.</title>
        <authorList>
            <person name="Chen W."/>
            <person name="Chen S."/>
            <person name="Yan C."/>
            <person name="Zhang Y."/>
            <person name="Zhang R."/>
            <person name="Chen M."/>
            <person name="Zhong S."/>
            <person name="Fan W."/>
            <person name="Zhu S."/>
            <person name="Zhang D."/>
            <person name="Lu X."/>
            <person name="Zhang J."/>
            <person name="Huang Y."/>
            <person name="Zhu L."/>
            <person name="Li X."/>
            <person name="Lv D."/>
            <person name="Fu Y."/>
            <person name="Iv H."/>
            <person name="Ling Z."/>
            <person name="Ma L."/>
            <person name="Jiang H."/>
            <person name="Long G."/>
            <person name="Zhu J."/>
            <person name="Wu D."/>
            <person name="Wu B."/>
            <person name="Sun B."/>
        </authorList>
    </citation>
    <scope>SUBCELLULAR LOCATION</scope>
    <scope>PROTEOLYTIC CLEAVAGE</scope>
</reference>
<reference key="10">
    <citation type="journal article" date="2022" name="Sci. Immunol.">
        <title>Gasdermin D-mediated release of IL-33 from senescent hepatic stellate cells promotes obesity-associated hepatocellular carcinoma.</title>
        <authorList>
            <person name="Yamagishi R."/>
            <person name="Kamachi F."/>
            <person name="Nakamura M."/>
            <person name="Yamazaki S."/>
            <person name="Kamiya T."/>
            <person name="Takasugi M."/>
            <person name="Cheng Y."/>
            <person name="Nonaka Y."/>
            <person name="Yukawa-Muto Y."/>
            <person name="Thuy L.T.T."/>
            <person name="Harada Y."/>
            <person name="Arai T."/>
            <person name="Loo T.M."/>
            <person name="Yoshimoto S."/>
            <person name="Ando T."/>
            <person name="Nakajima M."/>
            <person name="Taguchi H."/>
            <person name="Ishikawa T."/>
            <person name="Akiba H."/>
            <person name="Miyake S."/>
            <person name="Kubo M."/>
            <person name="Iwakura Y."/>
            <person name="Fukuda S."/>
            <person name="Chen W.Y."/>
            <person name="Kawada N."/>
            <person name="Rudensky A."/>
            <person name="Nakae S."/>
            <person name="Hara E."/>
            <person name="Ohtani N."/>
        </authorList>
    </citation>
    <scope>SUBCELLULAR LOCATION</scope>
    <scope>PROTEOLYTIC CLEAVAGE</scope>
</reference>
<name>IL33_MOUSE</name>
<sequence>MRPRMKYSNSKISPAKFSSTAGEALVPPCKIRRSQQKTKEFCHVYCMRLRSGLTIRKETSYFRKEPTKRYSLKSGTKHEENFSAYPRDSRKRSLLGSIQAFAASVDTLSIQGTSLLTQSPASLSTYNDQSVSFVLENGCYVINVDDSGKDQEQDQVLLRYYESPCPASQSGDGVDGKKLMVNMSPIKDTDIWLHANDKDYSVELQRGDVSPPEQAFFVLHKKSSDFVSFECKNLPGTYIGVKDNQLALVEEKDESCNNIMFKLSKI</sequence>
<proteinExistence type="evidence at protein level"/>
<gene>
    <name evidence="12" type="primary">Il33</name>
</gene>
<protein>
    <recommendedName>
        <fullName>Interleukin-33</fullName>
        <shortName>IL-33</shortName>
    </recommendedName>
    <component>
        <recommendedName>
            <fullName>Interleukin-33(102-266)</fullName>
        </recommendedName>
    </component>
    <component>
        <recommendedName>
            <fullName>Interleukin-33(109-266)</fullName>
        </recommendedName>
    </component>
</protein>
<accession>Q8BVZ5</accession>
<accession>Q2YEJ4</accession>
<accession>Q3TQN0</accession>
<accession>Q99L46</accession>